<accession>O13063</accession>
<gene>
    <name type="primary">TLG3</name>
</gene>
<evidence type="ECO:0000250" key="1"/>
<evidence type="ECO:0000255" key="2"/>
<evidence type="ECO:0000255" key="3">
    <source>
        <dbReference type="PROSITE-ProRule" id="PRU00274"/>
    </source>
</evidence>
<dbReference type="EC" id="3.4.21.-"/>
<dbReference type="EMBL" id="D67085">
    <property type="protein sequence ID" value="BAA19983.1"/>
    <property type="molecule type" value="mRNA"/>
</dbReference>
<dbReference type="SMR" id="O13063"/>
<dbReference type="MEROPS" id="S01.188"/>
<dbReference type="GlyCosmos" id="O13063">
    <property type="glycosylation" value="6 sites, No reported glycans"/>
</dbReference>
<dbReference type="GO" id="GO:0005576">
    <property type="term" value="C:extracellular region"/>
    <property type="evidence" value="ECO:0007669"/>
    <property type="project" value="UniProtKB-SubCell"/>
</dbReference>
<dbReference type="GO" id="GO:0030141">
    <property type="term" value="C:secretory granule"/>
    <property type="evidence" value="ECO:0007669"/>
    <property type="project" value="TreeGrafter"/>
</dbReference>
<dbReference type="GO" id="GO:0004252">
    <property type="term" value="F:serine-type endopeptidase activity"/>
    <property type="evidence" value="ECO:0007669"/>
    <property type="project" value="InterPro"/>
</dbReference>
<dbReference type="GO" id="GO:0090729">
    <property type="term" value="F:toxin activity"/>
    <property type="evidence" value="ECO:0007669"/>
    <property type="project" value="UniProtKB-KW"/>
</dbReference>
<dbReference type="GO" id="GO:0006508">
    <property type="term" value="P:proteolysis"/>
    <property type="evidence" value="ECO:0007669"/>
    <property type="project" value="UniProtKB-KW"/>
</dbReference>
<dbReference type="CDD" id="cd00190">
    <property type="entry name" value="Tryp_SPc"/>
    <property type="match status" value="1"/>
</dbReference>
<dbReference type="FunFam" id="2.40.10.10:FF:000158">
    <property type="entry name" value="Thrombin-like enzyme saxthrombin"/>
    <property type="match status" value="1"/>
</dbReference>
<dbReference type="Gene3D" id="2.40.10.10">
    <property type="entry name" value="Trypsin-like serine proteases"/>
    <property type="match status" value="2"/>
</dbReference>
<dbReference type="InterPro" id="IPR009003">
    <property type="entry name" value="Peptidase_S1_PA"/>
</dbReference>
<dbReference type="InterPro" id="IPR043504">
    <property type="entry name" value="Peptidase_S1_PA_chymotrypsin"/>
</dbReference>
<dbReference type="InterPro" id="IPR001314">
    <property type="entry name" value="Peptidase_S1A"/>
</dbReference>
<dbReference type="InterPro" id="IPR001254">
    <property type="entry name" value="Trypsin_dom"/>
</dbReference>
<dbReference type="InterPro" id="IPR018114">
    <property type="entry name" value="TRYPSIN_HIS"/>
</dbReference>
<dbReference type="InterPro" id="IPR033116">
    <property type="entry name" value="TRYPSIN_SER"/>
</dbReference>
<dbReference type="PANTHER" id="PTHR24271:SF47">
    <property type="entry name" value="KALLIKREIN-1"/>
    <property type="match status" value="1"/>
</dbReference>
<dbReference type="PANTHER" id="PTHR24271">
    <property type="entry name" value="KALLIKREIN-RELATED"/>
    <property type="match status" value="1"/>
</dbReference>
<dbReference type="Pfam" id="PF00089">
    <property type="entry name" value="Trypsin"/>
    <property type="match status" value="1"/>
</dbReference>
<dbReference type="PRINTS" id="PR00722">
    <property type="entry name" value="CHYMOTRYPSIN"/>
</dbReference>
<dbReference type="SMART" id="SM00020">
    <property type="entry name" value="Tryp_SPc"/>
    <property type="match status" value="1"/>
</dbReference>
<dbReference type="SUPFAM" id="SSF50494">
    <property type="entry name" value="Trypsin-like serine proteases"/>
    <property type="match status" value="1"/>
</dbReference>
<dbReference type="PROSITE" id="PS50240">
    <property type="entry name" value="TRYPSIN_DOM"/>
    <property type="match status" value="1"/>
</dbReference>
<dbReference type="PROSITE" id="PS00134">
    <property type="entry name" value="TRYPSIN_HIS"/>
    <property type="match status" value="1"/>
</dbReference>
<dbReference type="PROSITE" id="PS00135">
    <property type="entry name" value="TRYPSIN_SER"/>
    <property type="match status" value="1"/>
</dbReference>
<comment type="function">
    <text evidence="1">Snake venom serine protease that may act in the hemostasis system of the prey.</text>
</comment>
<comment type="subunit">
    <text evidence="1">Monomer.</text>
</comment>
<comment type="subcellular location">
    <subcellularLocation>
        <location>Secreted</location>
    </subcellularLocation>
</comment>
<comment type="tissue specificity">
    <text>Expressed by the venom gland.</text>
</comment>
<comment type="similarity">
    <text evidence="3">Belongs to the peptidase S1 family. Snake venom subfamily.</text>
</comment>
<organism>
    <name type="scientific">Craspedocephalus gramineus</name>
    <name type="common">Bamboo pit viper</name>
    <name type="synonym">Trimeresurus gramineus</name>
    <dbReference type="NCBI Taxonomy" id="8767"/>
    <lineage>
        <taxon>Eukaryota</taxon>
        <taxon>Metazoa</taxon>
        <taxon>Chordata</taxon>
        <taxon>Craniata</taxon>
        <taxon>Vertebrata</taxon>
        <taxon>Euteleostomi</taxon>
        <taxon>Lepidosauria</taxon>
        <taxon>Squamata</taxon>
        <taxon>Bifurcata</taxon>
        <taxon>Unidentata</taxon>
        <taxon>Episquamata</taxon>
        <taxon>Toxicofera</taxon>
        <taxon>Serpentes</taxon>
        <taxon>Colubroidea</taxon>
        <taxon>Viperidae</taxon>
        <taxon>Crotalinae</taxon>
        <taxon>Craspedocephalus</taxon>
    </lineage>
</organism>
<protein>
    <recommendedName>
        <fullName>Snake venom serine protease 3</fullName>
        <shortName>SVSP 3</shortName>
        <ecNumber>3.4.21.-</ecNumber>
    </recommendedName>
</protein>
<keyword id="KW-1015">Disulfide bond</keyword>
<keyword id="KW-0325">Glycoprotein</keyword>
<keyword id="KW-1199">Hemostasis impairing toxin</keyword>
<keyword id="KW-0378">Hydrolase</keyword>
<keyword id="KW-0645">Protease</keyword>
<keyword id="KW-0964">Secreted</keyword>
<keyword id="KW-0720">Serine protease</keyword>
<keyword id="KW-0732">Signal</keyword>
<keyword id="KW-0800">Toxin</keyword>
<keyword id="KW-0865">Zymogen</keyword>
<proteinExistence type="evidence at transcript level"/>
<name>VSP3_CRAGM</name>
<reference key="1">
    <citation type="journal article" date="1996" name="FEBS Lett.">
        <title>Accelerated evolution of crotalinae snake venom gland serine proteases.</title>
        <authorList>
            <person name="Deshimaru M."/>
            <person name="Ogawa T."/>
            <person name="Nakashima K."/>
            <person name="Nobuhisa I."/>
            <person name="Chijiwa T."/>
            <person name="Shimohigashi Y."/>
            <person name="Fukumaki Y."/>
            <person name="Niwa M."/>
            <person name="Yamashina I."/>
            <person name="Hattori S."/>
            <person name="Ohno M."/>
        </authorList>
    </citation>
    <scope>NUCLEOTIDE SEQUENCE [MRNA]</scope>
    <source>
        <tissue>Venom gland</tissue>
    </source>
</reference>
<sequence length="258" mass="28034">MVLIRVLANLLILQLSYAQKSSELVIGGDECNINEHRSLVVLFNSSGVLCGGTLINQEYVLTAAHCDMPNMQILLGVHSASVLNDDEQARDPEEKYFCLSSNNDTEWDKDIMLIRLNRSVNNSVHIAPLSLPSSPPRLGSVCRVMGWGAITSPNETYPDVPHCANINILRYSLCRAVYLGMPVQSRILCAGILRGGKDSCKGDSGGPLICNGQLQGIVSAGSDPCAKPRVPNLYIKVFDYTDWIQSIIAGNTTVTCPQ</sequence>
<feature type="signal peptide" evidence="1">
    <location>
        <begin position="1"/>
        <end position="18"/>
    </location>
</feature>
<feature type="propeptide" id="PRO_0000028399" evidence="1">
    <location>
        <begin position="19"/>
        <end position="24"/>
    </location>
</feature>
<feature type="chain" id="PRO_0000028400" description="Snake venom serine protease 3">
    <location>
        <begin position="25"/>
        <end position="258"/>
    </location>
</feature>
<feature type="domain" description="Peptidase S1" evidence="3">
    <location>
        <begin position="25"/>
        <end position="249"/>
    </location>
</feature>
<feature type="active site" description="Charge relay system" evidence="1">
    <location>
        <position position="65"/>
    </location>
</feature>
<feature type="active site" description="Charge relay system" evidence="1">
    <location>
        <position position="110"/>
    </location>
</feature>
<feature type="active site" description="Charge relay system" evidence="1">
    <location>
        <position position="204"/>
    </location>
</feature>
<feature type="glycosylation site" description="N-linked (GlcNAc...) asparagine" evidence="2">
    <location>
        <position position="44"/>
    </location>
</feature>
<feature type="glycosylation site" description="N-linked (GlcNAc...) asparagine" evidence="2">
    <location>
        <position position="103"/>
    </location>
</feature>
<feature type="glycosylation site" description="N-linked (GlcNAc...) asparagine" evidence="2">
    <location>
        <position position="117"/>
    </location>
</feature>
<feature type="glycosylation site" description="N-linked (GlcNAc...) asparagine" evidence="2">
    <location>
        <position position="121"/>
    </location>
</feature>
<feature type="glycosylation site" description="N-linked (GlcNAc...) asparagine" evidence="2">
    <location>
        <position position="154"/>
    </location>
</feature>
<feature type="glycosylation site" description="N-linked (GlcNAc...) asparagine" evidence="2">
    <location>
        <position position="251"/>
    </location>
</feature>
<feature type="disulfide bond" evidence="3">
    <location>
        <begin position="31"/>
        <end position="163"/>
    </location>
</feature>
<feature type="disulfide bond" evidence="3">
    <location>
        <begin position="50"/>
        <end position="66"/>
    </location>
</feature>
<feature type="disulfide bond" evidence="3">
    <location>
        <begin position="98"/>
        <end position="256"/>
    </location>
</feature>
<feature type="disulfide bond" evidence="3">
    <location>
        <begin position="142"/>
        <end position="210"/>
    </location>
</feature>
<feature type="disulfide bond" evidence="3">
    <location>
        <begin position="174"/>
        <end position="189"/>
    </location>
</feature>
<feature type="disulfide bond" evidence="3">
    <location>
        <begin position="200"/>
        <end position="225"/>
    </location>
</feature>